<comment type="function">
    <text evidence="1 2 5 6 8">Transcription regulator that converts stress signals into a program of gene expression that empowers cells with resistance to the stress induced by a change in their microenvironment. Thereby participates in the regulation of many processes namely cell-cycle, apoptosis, autophagy and DNA repair responses (PubMed:20181828, PubMed:27031958, PubMed:28694771). Controls cell cycle progression and protects cells from genotoxic stress induced by doxorubicin through the complex formation with TP53 and EP300 that binds CDKN1A promoter leading to transcriptional induction of CDKN1A (By similarity). Protects pancreatic cancer cells from stress-induced cell death by binding the RELB promoter and activating its transcription, leading to IER3 transactivation (By similarity). Negatively regulates apoptosis through interaction with PTMA (By similarity). Inhibits autophagy-induced apoptosis in cardiac cells through FOXO3 interaction, inducing cytoplasmic translocation of FOXO3 thereby preventing the FOXO3 association with the pro-autophagic BNIP3 promoter (PubMed:20181828). Inhibits cell growth and facilitates programmed cell death by apoptosis after adriamycin-induced DNA damage through transactivation of TP53 (By similarity). Regulates methamphetamine-induced apoptosis and autophagy through DDIT3-mediated endoplasmic reticulum stress pathway (PubMed:27031958, PubMed:28694771). Participates in DNA repair following gamma-irradiation by facilitating DNA access of the transcription machinery through interaction with MSL1 leading to inhibition of histone H4' Lys-16' acetylation (H4K16ac) (By similarity). Coactivator of PAX2 transcription factor activity, both by recruiting the EP300 cofactor to increase PAX2 transcription factor activity and by binding PAXIP1 to suppress PAXIP1-induced inhibition on PAX2 (By similarity). Positively regulates cell cycle progression through interaction with COPS5 inducing cytoplasmic translocation of CDKN1B leading to the CDKN1B degradation (By similarity). Coordinates, through its interaction with EP300, the assiociation of MYOD1, EP300 and DDX5 to the MYOG promoter, leading to inhibition of cell-cycle progression and myogenic differentiation promotion (By similarity). Negatively regulates beta cell proliferation via inhibition of cell-cycle regulatory genes expression through the suppression of their promoter activities (By similarity). Also required for LHB expression and ovarian maturation (By similarity). Exacerbates CNS inflammation and demyelination upon cuprizone treatment (By similarity).</text>
</comment>
<comment type="subunit">
    <text evidence="1 2">Monomer. Directly interacts with MSL1 and binds MORF4L1, two components of histone acetyltransferase complex; the interaction with MORF4L1 may be mediated by MSL1. Interacts with EP300; this interaction enhances the effect of EP300 on PAX2 transcription factor activity. Interacts with PAXIP1; this interaction prevents PAXIP1 inhibition of PAX2 transcription factor activity. Interacts with COPS5; this interaction allows COPS5-dependent CDKN1B nuclear to cytoplasm translocation. Interacts with RNF2. Interacts with FOXO3; this interaction represses FOXO3 transactivation. Interacts with PTMA; regulates apoptotic process (By similarity). Interacts with MYOD1, EP300 and DDX5; this interaction coordinates the association of anti-proliferative and pro-myogenic proteins at the myogenin promoter (By similarity). Interacts with TP53; interaction is stress-dependent. Forms a complex with EP300 and TP53; this complex binds CDKN1A promoter leading to transcriptional induction of CDKN1A (By similarity).</text>
</comment>
<comment type="subcellular location">
    <subcellularLocation>
        <location evidence="1">Nucleus</location>
    </subcellularLocation>
    <subcellularLocation>
        <location evidence="1">Cytoplasm</location>
    </subcellularLocation>
    <subcellularLocation>
        <location evidence="1">Cytoplasm</location>
        <location evidence="1">Perinuclear region</location>
    </subcellularLocation>
</comment>
<comment type="tissue specificity">
    <text>Strongly activated in pancreatic acinar cells during the acute phase of pancreatitis, in developing pancreas and during pancreatic regeneration.</text>
</comment>
<comment type="induction">
    <text evidence="5 6 7 8">Increased by methamphetamine (PubMed:27031958, PubMed:28694771). Up-regulated by cyclosporin A (PubMed:27451286). Induced by energy nd amino acid deprivation (PubMed:20181828).</text>
</comment>
<comment type="PTM">
    <text evidence="1">Phosphorylated. Phosphorylation promotes DNA-binding activity.</text>
</comment>
<comment type="PTM">
    <text evidence="1">Acetylated.</text>
</comment>
<comment type="similarity">
    <text evidence="10">Belongs to the NUPR family.</text>
</comment>
<name>NUPR1_RAT</name>
<keyword id="KW-0963">Cytoplasm</keyword>
<keyword id="KW-0539">Nucleus</keyword>
<keyword id="KW-1185">Reference proteome</keyword>
<feature type="chain" id="PRO_0000058009" description="Nuclear protein 1">
    <location>
        <begin position="1"/>
        <end position="80"/>
    </location>
</feature>
<feature type="region of interest" description="Disordered" evidence="4">
    <location>
        <begin position="40"/>
        <end position="80"/>
    </location>
</feature>
<feature type="short sequence motif" description="Nuclear localization signal" evidence="3">
    <location>
        <begin position="64"/>
        <end position="80"/>
    </location>
</feature>
<feature type="compositionally biased region" description="Basic and acidic residues" evidence="4">
    <location>
        <begin position="61"/>
        <end position="80"/>
    </location>
</feature>
<organism>
    <name type="scientific">Rattus norvegicus</name>
    <name type="common">Rat</name>
    <dbReference type="NCBI Taxonomy" id="10116"/>
    <lineage>
        <taxon>Eukaryota</taxon>
        <taxon>Metazoa</taxon>
        <taxon>Chordata</taxon>
        <taxon>Craniata</taxon>
        <taxon>Vertebrata</taxon>
        <taxon>Euteleostomi</taxon>
        <taxon>Mammalia</taxon>
        <taxon>Eutheria</taxon>
        <taxon>Euarchontoglires</taxon>
        <taxon>Glires</taxon>
        <taxon>Rodentia</taxon>
        <taxon>Myomorpha</taxon>
        <taxon>Muroidea</taxon>
        <taxon>Muridae</taxon>
        <taxon>Murinae</taxon>
        <taxon>Rattus</taxon>
    </lineage>
</organism>
<dbReference type="EMBL" id="AF014503">
    <property type="protein sequence ID" value="AAB94673.1"/>
    <property type="molecule type" value="mRNA"/>
</dbReference>
<dbReference type="RefSeq" id="NP_446063.1">
    <property type="nucleotide sequence ID" value="NM_053611.2"/>
</dbReference>
<dbReference type="FunCoup" id="O54842">
    <property type="interactions" value="73"/>
</dbReference>
<dbReference type="STRING" id="10116.ENSRNOP00000025988"/>
<dbReference type="iPTMnet" id="O54842"/>
<dbReference type="PhosphoSitePlus" id="O54842"/>
<dbReference type="PaxDb" id="10116-ENSRNOP00000025988"/>
<dbReference type="GeneID" id="100912108"/>
<dbReference type="KEGG" id="rno:100912108"/>
<dbReference type="UCSC" id="RGD:69363">
    <property type="organism name" value="rat"/>
</dbReference>
<dbReference type="AGR" id="RGD:69363"/>
<dbReference type="CTD" id="26471"/>
<dbReference type="RGD" id="69363">
    <property type="gene designation" value="Nupr1"/>
</dbReference>
<dbReference type="eggNOG" id="KOG4319">
    <property type="taxonomic scope" value="Eukaryota"/>
</dbReference>
<dbReference type="HOGENOM" id="CLU_180450_1_0_1"/>
<dbReference type="InParanoid" id="O54842"/>
<dbReference type="OrthoDB" id="16427at9989"/>
<dbReference type="PhylomeDB" id="O54842"/>
<dbReference type="TreeFam" id="TF324649"/>
<dbReference type="PRO" id="PR:O54842"/>
<dbReference type="Proteomes" id="UP000002494">
    <property type="component" value="Unplaced"/>
</dbReference>
<dbReference type="GO" id="GO:0005737">
    <property type="term" value="C:cytoplasm"/>
    <property type="evidence" value="ECO:0000250"/>
    <property type="project" value="UniProtKB"/>
</dbReference>
<dbReference type="GO" id="GO:0045171">
    <property type="term" value="C:intercellular bridge"/>
    <property type="evidence" value="ECO:0007669"/>
    <property type="project" value="Ensembl"/>
</dbReference>
<dbReference type="GO" id="GO:0005654">
    <property type="term" value="C:nucleoplasm"/>
    <property type="evidence" value="ECO:0007669"/>
    <property type="project" value="Ensembl"/>
</dbReference>
<dbReference type="GO" id="GO:0005634">
    <property type="term" value="C:nucleus"/>
    <property type="evidence" value="ECO:0000250"/>
    <property type="project" value="UniProtKB"/>
</dbReference>
<dbReference type="GO" id="GO:0048471">
    <property type="term" value="C:perinuclear region of cytoplasm"/>
    <property type="evidence" value="ECO:0000250"/>
    <property type="project" value="UniProtKB"/>
</dbReference>
<dbReference type="GO" id="GO:0032993">
    <property type="term" value="C:protein-DNA complex"/>
    <property type="evidence" value="ECO:0000266"/>
    <property type="project" value="RGD"/>
</dbReference>
<dbReference type="GO" id="GO:0010698">
    <property type="term" value="F:acetyltransferase activator activity"/>
    <property type="evidence" value="ECO:0000250"/>
    <property type="project" value="UniProtKB"/>
</dbReference>
<dbReference type="GO" id="GO:0003682">
    <property type="term" value="F:chromatin binding"/>
    <property type="evidence" value="ECO:0000266"/>
    <property type="project" value="RGD"/>
</dbReference>
<dbReference type="GO" id="GO:0003677">
    <property type="term" value="F:DNA binding"/>
    <property type="evidence" value="ECO:0000250"/>
    <property type="project" value="UniProtKB"/>
</dbReference>
<dbReference type="GO" id="GO:0003713">
    <property type="term" value="F:transcription coactivator activity"/>
    <property type="evidence" value="ECO:0000250"/>
    <property type="project" value="UniProtKB"/>
</dbReference>
<dbReference type="GO" id="GO:0002526">
    <property type="term" value="P:acute inflammatory response"/>
    <property type="evidence" value="ECO:0000266"/>
    <property type="project" value="RGD"/>
</dbReference>
<dbReference type="GO" id="GO:0044346">
    <property type="term" value="P:fibroblast apoptotic process"/>
    <property type="evidence" value="ECO:0000266"/>
    <property type="project" value="RGD"/>
</dbReference>
<dbReference type="GO" id="GO:0048144">
    <property type="term" value="P:fibroblast proliferation"/>
    <property type="evidence" value="ECO:0000266"/>
    <property type="project" value="RGD"/>
</dbReference>
<dbReference type="GO" id="GO:0042771">
    <property type="term" value="P:intrinsic apoptotic signaling pathway in response to DNA damage by p53 class mediator"/>
    <property type="evidence" value="ECO:0000266"/>
    <property type="project" value="RGD"/>
</dbReference>
<dbReference type="GO" id="GO:0008584">
    <property type="term" value="P:male gonad development"/>
    <property type="evidence" value="ECO:0000266"/>
    <property type="project" value="RGD"/>
</dbReference>
<dbReference type="GO" id="GO:0043066">
    <property type="term" value="P:negative regulation of apoptotic process"/>
    <property type="evidence" value="ECO:0000250"/>
    <property type="project" value="UniProtKB"/>
</dbReference>
<dbReference type="GO" id="GO:1902902">
    <property type="term" value="P:negative regulation of autophagosome assembly"/>
    <property type="evidence" value="ECO:0000250"/>
    <property type="project" value="UniProtKB"/>
</dbReference>
<dbReference type="GO" id="GO:0010507">
    <property type="term" value="P:negative regulation of autophagy"/>
    <property type="evidence" value="ECO:0000315"/>
    <property type="project" value="UniProtKB"/>
</dbReference>
<dbReference type="GO" id="GO:0010667">
    <property type="term" value="P:negative regulation of cardiac muscle cell apoptotic process"/>
    <property type="evidence" value="ECO:0000315"/>
    <property type="project" value="UniProtKB"/>
</dbReference>
<dbReference type="GO" id="GO:0045786">
    <property type="term" value="P:negative regulation of cell cycle"/>
    <property type="evidence" value="ECO:0000250"/>
    <property type="project" value="UniProtKB"/>
</dbReference>
<dbReference type="GO" id="GO:0008285">
    <property type="term" value="P:negative regulation of cell population proliferation"/>
    <property type="evidence" value="ECO:0000318"/>
    <property type="project" value="GO_Central"/>
</dbReference>
<dbReference type="GO" id="GO:0043433">
    <property type="term" value="P:negative regulation of DNA-binding transcription factor activity"/>
    <property type="evidence" value="ECO:0000315"/>
    <property type="project" value="UniProtKB"/>
</dbReference>
<dbReference type="GO" id="GO:1904036">
    <property type="term" value="P:negative regulation of epithelial cell apoptotic process"/>
    <property type="evidence" value="ECO:0000250"/>
    <property type="project" value="UniProtKB"/>
</dbReference>
<dbReference type="GO" id="GO:0050680">
    <property type="term" value="P:negative regulation of epithelial cell proliferation"/>
    <property type="evidence" value="ECO:0000250"/>
    <property type="project" value="UniProtKB"/>
</dbReference>
<dbReference type="GO" id="GO:0048147">
    <property type="term" value="P:negative regulation of fibroblast proliferation"/>
    <property type="evidence" value="ECO:0000266"/>
    <property type="project" value="RGD"/>
</dbReference>
<dbReference type="GO" id="GO:0045820">
    <property type="term" value="P:negative regulation of glycolytic process"/>
    <property type="evidence" value="ECO:0000250"/>
    <property type="project" value="UniProtKB"/>
</dbReference>
<dbReference type="GO" id="GO:0062099">
    <property type="term" value="P:negative regulation of programmed necrotic cell death"/>
    <property type="evidence" value="ECO:0000250"/>
    <property type="project" value="UniProtKB"/>
</dbReference>
<dbReference type="GO" id="GO:1904691">
    <property type="term" value="P:negative regulation of type B pancreatic cell proliferation"/>
    <property type="evidence" value="ECO:0000250"/>
    <property type="project" value="UniProtKB"/>
</dbReference>
<dbReference type="GO" id="GO:0045787">
    <property type="term" value="P:positive regulation of cell cycle"/>
    <property type="evidence" value="ECO:0000266"/>
    <property type="project" value="RGD"/>
</dbReference>
<dbReference type="GO" id="GO:2000271">
    <property type="term" value="P:positive regulation of fibroblast apoptotic process"/>
    <property type="evidence" value="ECO:0000266"/>
    <property type="project" value="RGD"/>
</dbReference>
<dbReference type="GO" id="GO:2001244">
    <property type="term" value="P:positive regulation of intrinsic apoptotic signaling pathway"/>
    <property type="evidence" value="ECO:0000315"/>
    <property type="project" value="UniProtKB"/>
</dbReference>
<dbReference type="GO" id="GO:0150078">
    <property type="term" value="P:positive regulation of neuroinflammatory response"/>
    <property type="evidence" value="ECO:0000250"/>
    <property type="project" value="UniProtKB"/>
</dbReference>
<dbReference type="GO" id="GO:0043525">
    <property type="term" value="P:positive regulation of neuron apoptotic process"/>
    <property type="evidence" value="ECO:0000315"/>
    <property type="project" value="UniProtKB"/>
</dbReference>
<dbReference type="GO" id="GO:1903862">
    <property type="term" value="P:positive regulation of oxidative phosphorylation"/>
    <property type="evidence" value="ECO:0000250"/>
    <property type="project" value="UniProtKB"/>
</dbReference>
<dbReference type="GO" id="GO:1901800">
    <property type="term" value="P:positive regulation of proteasomal protein catabolic process"/>
    <property type="evidence" value="ECO:0000250"/>
    <property type="project" value="UniProtKB"/>
</dbReference>
<dbReference type="GO" id="GO:0065003">
    <property type="term" value="P:protein-containing complex assembly"/>
    <property type="evidence" value="ECO:0000266"/>
    <property type="project" value="RGD"/>
</dbReference>
<dbReference type="GO" id="GO:0010506">
    <property type="term" value="P:regulation of autophagy"/>
    <property type="evidence" value="ECO:0000315"/>
    <property type="project" value="UniProtKB"/>
</dbReference>
<dbReference type="GO" id="GO:2000194">
    <property type="term" value="P:regulation of female gonad development"/>
    <property type="evidence" value="ECO:0000266"/>
    <property type="project" value="RGD"/>
</dbReference>
<dbReference type="GO" id="GO:1905897">
    <property type="term" value="P:regulation of response to endoplasmic reticulum stress"/>
    <property type="evidence" value="ECO:0000315"/>
    <property type="project" value="UniProtKB"/>
</dbReference>
<dbReference type="GO" id="GO:0009636">
    <property type="term" value="P:response to toxic substance"/>
    <property type="evidence" value="ECO:0000266"/>
    <property type="project" value="RGD"/>
</dbReference>
<dbReference type="GO" id="GO:0035914">
    <property type="term" value="P:skeletal muscle cell differentiation"/>
    <property type="evidence" value="ECO:0000266"/>
    <property type="project" value="RGD"/>
</dbReference>
<dbReference type="InterPro" id="IPR018792">
    <property type="entry name" value="NUPR1-like"/>
</dbReference>
<dbReference type="PANTHER" id="PTHR17149:SF5">
    <property type="entry name" value="NUCLEAR PROTEIN 1"/>
    <property type="match status" value="1"/>
</dbReference>
<dbReference type="PANTHER" id="PTHR17149">
    <property type="entry name" value="NUCLEAR PROTEIN 1 AND 2"/>
    <property type="match status" value="1"/>
</dbReference>
<dbReference type="Pfam" id="PF10195">
    <property type="entry name" value="Phospho_p8"/>
    <property type="match status" value="1"/>
</dbReference>
<reference key="1">
    <citation type="journal article" date="1997" name="J. Biol. Chem.">
        <title>Cloning and expression of the rat p8 cDNA, a new gene activated in pancreas during the acute phase of pancreatitis, pancreatic development, and regeneration, and which promotes cellular growth.</title>
        <authorList>
            <person name="Mallo G.V."/>
            <person name="Fiedler F."/>
            <person name="Calvo E.L."/>
            <person name="Ortiz E.M."/>
            <person name="Vasseur S."/>
            <person name="Keim V."/>
            <person name="Morisset J."/>
            <person name="Iovanna J.L."/>
        </authorList>
    </citation>
    <scope>NUCLEOTIDE SEQUENCE [MRNA]</scope>
    <source>
        <strain>Sprague-Dawley</strain>
        <tissue>Pancreas</tissue>
    </source>
</reference>
<reference key="2">
    <citation type="journal article" date="2010" name="Mol. Biol. Cell">
        <title>Deficiency of the transcriptional regulator p8 results in increased autophagy and apoptosis, and causes impaired heart function.</title>
        <authorList>
            <person name="Kong D.K."/>
            <person name="Georgescu S.P."/>
            <person name="Cano C."/>
            <person name="Aronovitz M.J."/>
            <person name="Iovanna J.L."/>
            <person name="Patten R.D."/>
            <person name="Kyriakis J.M."/>
            <person name="Goruppi S."/>
        </authorList>
    </citation>
    <scope>INDUCTION</scope>
    <scope>FUNCTION</scope>
</reference>
<reference key="3">
    <citation type="journal article" date="2016" name="Cell Death Dis.">
        <title>Nupr1/Chop signal axis is involved in mitochondrion-related endothelial cell apoptosis induced by methamphetamine.</title>
        <authorList>
            <person name="Cai D."/>
            <person name="Huang E."/>
            <person name="Luo B."/>
            <person name="Yang Y."/>
            <person name="Zhang F."/>
            <person name="Liu C."/>
            <person name="Lin Z."/>
            <person name="Xie W.B."/>
            <person name="Wang H."/>
        </authorList>
    </citation>
    <scope>INDUCTION BY METHAMPHETAMINE</scope>
    <scope>FUNCTION</scope>
</reference>
<reference key="4">
    <citation type="journal article" date="2017" name="J. Am. Soc. Nephrol.">
        <title>Stress Response Gene Nupr1 Alleviates Cyclosporin A Nephrotoxicity In Vivo.</title>
        <authorList>
            <person name="Galichon P."/>
            <person name="Bataille A."/>
            <person name="Vandermeersch S."/>
            <person name="Wetzstein M."/>
            <person name="Xu-Dubois Y.C."/>
            <person name="Legouis D."/>
            <person name="Hertig A."/>
            <person name="Buob D."/>
            <person name="Placier S."/>
            <person name="Bige N."/>
            <person name="Lefevre G."/>
            <person name="Jouanneau C."/>
            <person name="Martin C."/>
            <person name="Iovanna J.L."/>
            <person name="Rondeau E."/>
        </authorList>
    </citation>
    <scope>INDUCTION BY CYCLOSPORIN A</scope>
</reference>
<reference key="5">
    <citation type="journal article" date="2017" name="Front. Mol. Neurosci.">
        <title>Nupr1 Modulates Methamphetamine-Induced Dopaminergic Neuronal Apoptosis and Autophagy through CHOP-Trib3-Mediated Endoplasmic Reticulum Stress Signaling Pathway.</title>
        <authorList>
            <person name="Xu X."/>
            <person name="Huang E."/>
            <person name="Tai Y."/>
            <person name="Zhao X."/>
            <person name="Chen X."/>
            <person name="Chen C."/>
            <person name="Chen R."/>
            <person name="Liu C."/>
            <person name="Lin Z."/>
            <person name="Wang H."/>
            <person name="Xie W.B."/>
        </authorList>
    </citation>
    <scope>INDUCTION BY METHAMPHETAMINE</scope>
    <scope>FUNCTION</scope>
</reference>
<evidence type="ECO:0000250" key="1">
    <source>
        <dbReference type="UniProtKB" id="O60356"/>
    </source>
</evidence>
<evidence type="ECO:0000250" key="2">
    <source>
        <dbReference type="UniProtKB" id="Q9WTK0"/>
    </source>
</evidence>
<evidence type="ECO:0000255" key="3"/>
<evidence type="ECO:0000256" key="4">
    <source>
        <dbReference type="SAM" id="MobiDB-lite"/>
    </source>
</evidence>
<evidence type="ECO:0000269" key="5">
    <source>
    </source>
</evidence>
<evidence type="ECO:0000269" key="6">
    <source>
    </source>
</evidence>
<evidence type="ECO:0000269" key="7">
    <source>
    </source>
</evidence>
<evidence type="ECO:0000269" key="8">
    <source>
    </source>
</evidence>
<evidence type="ECO:0000303" key="9">
    <source>
    </source>
</evidence>
<evidence type="ECO:0000305" key="10"/>
<evidence type="ECO:0000312" key="11">
    <source>
        <dbReference type="RGD" id="69363"/>
    </source>
</evidence>
<protein>
    <recommendedName>
        <fullName evidence="10">Nuclear protein 1</fullName>
    </recommendedName>
    <alternativeName>
        <fullName evidence="9">Protein p8</fullName>
    </alternativeName>
</protein>
<proteinExistence type="evidence at transcript level"/>
<gene>
    <name evidence="11" type="primary">Nupr1</name>
</gene>
<sequence>MATLPPTAHTSQQPVNIEDEDGILDEYDQYSLAQSYVVGGGRKGRTKREAAANTNRPSPGGHERKLLTKFQNSERKKAWR</sequence>
<accession>O54842</accession>